<protein>
    <recommendedName>
        <fullName evidence="1">Large ribosomal subunit protein bL20</fullName>
    </recommendedName>
    <alternativeName>
        <fullName evidence="2">50S ribosomal protein L20</fullName>
    </alternativeName>
</protein>
<organism>
    <name type="scientific">Escherichia coli O6:K15:H31 (strain 536 / UPEC)</name>
    <dbReference type="NCBI Taxonomy" id="362663"/>
    <lineage>
        <taxon>Bacteria</taxon>
        <taxon>Pseudomonadati</taxon>
        <taxon>Pseudomonadota</taxon>
        <taxon>Gammaproteobacteria</taxon>
        <taxon>Enterobacterales</taxon>
        <taxon>Enterobacteriaceae</taxon>
        <taxon>Escherichia</taxon>
    </lineage>
</organism>
<feature type="chain" id="PRO_1000048972" description="Large ribosomal subunit protein bL20">
    <location>
        <begin position="1"/>
        <end position="118"/>
    </location>
</feature>
<comment type="function">
    <text evidence="1">Binds directly to 23S ribosomal RNA and is necessary for the in vitro assembly process of the 50S ribosomal subunit. It is not involved in the protein synthesizing functions of that subunit.</text>
</comment>
<comment type="similarity">
    <text evidence="1">Belongs to the bacterial ribosomal protein bL20 family.</text>
</comment>
<gene>
    <name evidence="1" type="primary">rplT</name>
    <name type="ordered locus">ECP_1663</name>
</gene>
<dbReference type="EMBL" id="CP000247">
    <property type="protein sequence ID" value="ABG69666.1"/>
    <property type="molecule type" value="Genomic_DNA"/>
</dbReference>
<dbReference type="RefSeq" id="WP_000124850.1">
    <property type="nucleotide sequence ID" value="NC_008253.1"/>
</dbReference>
<dbReference type="SMR" id="Q0THB3"/>
<dbReference type="GeneID" id="98388757"/>
<dbReference type="KEGG" id="ecp:ECP_1663"/>
<dbReference type="HOGENOM" id="CLU_123265_0_1_6"/>
<dbReference type="Proteomes" id="UP000009182">
    <property type="component" value="Chromosome"/>
</dbReference>
<dbReference type="GO" id="GO:1990904">
    <property type="term" value="C:ribonucleoprotein complex"/>
    <property type="evidence" value="ECO:0007669"/>
    <property type="project" value="UniProtKB-KW"/>
</dbReference>
<dbReference type="GO" id="GO:0005840">
    <property type="term" value="C:ribosome"/>
    <property type="evidence" value="ECO:0007669"/>
    <property type="project" value="UniProtKB-KW"/>
</dbReference>
<dbReference type="GO" id="GO:0019843">
    <property type="term" value="F:rRNA binding"/>
    <property type="evidence" value="ECO:0007669"/>
    <property type="project" value="UniProtKB-UniRule"/>
</dbReference>
<dbReference type="GO" id="GO:0003735">
    <property type="term" value="F:structural constituent of ribosome"/>
    <property type="evidence" value="ECO:0007669"/>
    <property type="project" value="InterPro"/>
</dbReference>
<dbReference type="GO" id="GO:0000027">
    <property type="term" value="P:ribosomal large subunit assembly"/>
    <property type="evidence" value="ECO:0007669"/>
    <property type="project" value="UniProtKB-UniRule"/>
</dbReference>
<dbReference type="GO" id="GO:0006412">
    <property type="term" value="P:translation"/>
    <property type="evidence" value="ECO:0007669"/>
    <property type="project" value="InterPro"/>
</dbReference>
<dbReference type="CDD" id="cd07026">
    <property type="entry name" value="Ribosomal_L20"/>
    <property type="match status" value="1"/>
</dbReference>
<dbReference type="FunFam" id="1.10.1900.20:FF:000001">
    <property type="entry name" value="50S ribosomal protein L20"/>
    <property type="match status" value="1"/>
</dbReference>
<dbReference type="Gene3D" id="6.10.160.10">
    <property type="match status" value="1"/>
</dbReference>
<dbReference type="Gene3D" id="1.10.1900.20">
    <property type="entry name" value="Ribosomal protein L20"/>
    <property type="match status" value="1"/>
</dbReference>
<dbReference type="HAMAP" id="MF_00382">
    <property type="entry name" value="Ribosomal_bL20"/>
    <property type="match status" value="1"/>
</dbReference>
<dbReference type="InterPro" id="IPR005813">
    <property type="entry name" value="Ribosomal_bL20"/>
</dbReference>
<dbReference type="InterPro" id="IPR049946">
    <property type="entry name" value="RIBOSOMAL_L20_CS"/>
</dbReference>
<dbReference type="InterPro" id="IPR035566">
    <property type="entry name" value="Ribosomal_protein_bL20_C"/>
</dbReference>
<dbReference type="NCBIfam" id="TIGR01032">
    <property type="entry name" value="rplT_bact"/>
    <property type="match status" value="1"/>
</dbReference>
<dbReference type="PANTHER" id="PTHR10986">
    <property type="entry name" value="39S RIBOSOMAL PROTEIN L20"/>
    <property type="match status" value="1"/>
</dbReference>
<dbReference type="Pfam" id="PF00453">
    <property type="entry name" value="Ribosomal_L20"/>
    <property type="match status" value="1"/>
</dbReference>
<dbReference type="PRINTS" id="PR00062">
    <property type="entry name" value="RIBOSOMALL20"/>
</dbReference>
<dbReference type="SUPFAM" id="SSF74731">
    <property type="entry name" value="Ribosomal protein L20"/>
    <property type="match status" value="1"/>
</dbReference>
<dbReference type="PROSITE" id="PS00937">
    <property type="entry name" value="RIBOSOMAL_L20"/>
    <property type="match status" value="1"/>
</dbReference>
<sequence>MARVKRGVIARARHKKILKQAKGYYGARSRVYRVAFQAVIKAGQYAYRDRRQRKRQFRQLWIARINAAARQNGISYSKFINGLKKASVEIDRKILADIAVFDKVAFTALVEKAKAALA</sequence>
<accession>Q0THB3</accession>
<proteinExistence type="inferred from homology"/>
<evidence type="ECO:0000255" key="1">
    <source>
        <dbReference type="HAMAP-Rule" id="MF_00382"/>
    </source>
</evidence>
<evidence type="ECO:0000305" key="2"/>
<keyword id="KW-0687">Ribonucleoprotein</keyword>
<keyword id="KW-0689">Ribosomal protein</keyword>
<keyword id="KW-0694">RNA-binding</keyword>
<keyword id="KW-0699">rRNA-binding</keyword>
<reference key="1">
    <citation type="journal article" date="2006" name="Mol. Microbiol.">
        <title>Role of pathogenicity island-associated integrases in the genome plasticity of uropathogenic Escherichia coli strain 536.</title>
        <authorList>
            <person name="Hochhut B."/>
            <person name="Wilde C."/>
            <person name="Balling G."/>
            <person name="Middendorf B."/>
            <person name="Dobrindt U."/>
            <person name="Brzuszkiewicz E."/>
            <person name="Gottschalk G."/>
            <person name="Carniel E."/>
            <person name="Hacker J."/>
        </authorList>
    </citation>
    <scope>NUCLEOTIDE SEQUENCE [LARGE SCALE GENOMIC DNA]</scope>
    <source>
        <strain>536 / UPEC</strain>
    </source>
</reference>
<name>RL20_ECOL5</name>